<proteinExistence type="evidence at protein level"/>
<gene>
    <name type="primary">pcif1</name>
</gene>
<reference key="1">
    <citation type="journal article" date="2013" name="Nature">
        <title>The zebrafish reference genome sequence and its relationship to the human genome.</title>
        <authorList>
            <person name="Howe K."/>
            <person name="Clark M.D."/>
            <person name="Torroja C.F."/>
            <person name="Torrance J."/>
            <person name="Berthelot C."/>
            <person name="Muffato M."/>
            <person name="Collins J.E."/>
            <person name="Humphray S."/>
            <person name="McLaren K."/>
            <person name="Matthews L."/>
            <person name="McLaren S."/>
            <person name="Sealy I."/>
            <person name="Caccamo M."/>
            <person name="Churcher C."/>
            <person name="Scott C."/>
            <person name="Barrett J.C."/>
            <person name="Koch R."/>
            <person name="Rauch G.J."/>
            <person name="White S."/>
            <person name="Chow W."/>
            <person name="Kilian B."/>
            <person name="Quintais L.T."/>
            <person name="Guerra-Assuncao J.A."/>
            <person name="Zhou Y."/>
            <person name="Gu Y."/>
            <person name="Yen J."/>
            <person name="Vogel J.H."/>
            <person name="Eyre T."/>
            <person name="Redmond S."/>
            <person name="Banerjee R."/>
            <person name="Chi J."/>
            <person name="Fu B."/>
            <person name="Langley E."/>
            <person name="Maguire S.F."/>
            <person name="Laird G.K."/>
            <person name="Lloyd D."/>
            <person name="Kenyon E."/>
            <person name="Donaldson S."/>
            <person name="Sehra H."/>
            <person name="Almeida-King J."/>
            <person name="Loveland J."/>
            <person name="Trevanion S."/>
            <person name="Jones M."/>
            <person name="Quail M."/>
            <person name="Willey D."/>
            <person name="Hunt A."/>
            <person name="Burton J."/>
            <person name="Sims S."/>
            <person name="McLay K."/>
            <person name="Plumb B."/>
            <person name="Davis J."/>
            <person name="Clee C."/>
            <person name="Oliver K."/>
            <person name="Clark R."/>
            <person name="Riddle C."/>
            <person name="Elliot D."/>
            <person name="Threadgold G."/>
            <person name="Harden G."/>
            <person name="Ware D."/>
            <person name="Begum S."/>
            <person name="Mortimore B."/>
            <person name="Kerry G."/>
            <person name="Heath P."/>
            <person name="Phillimore B."/>
            <person name="Tracey A."/>
            <person name="Corby N."/>
            <person name="Dunn M."/>
            <person name="Johnson C."/>
            <person name="Wood J."/>
            <person name="Clark S."/>
            <person name="Pelan S."/>
            <person name="Griffiths G."/>
            <person name="Smith M."/>
            <person name="Glithero R."/>
            <person name="Howden P."/>
            <person name="Barker N."/>
            <person name="Lloyd C."/>
            <person name="Stevens C."/>
            <person name="Harley J."/>
            <person name="Holt K."/>
            <person name="Panagiotidis G."/>
            <person name="Lovell J."/>
            <person name="Beasley H."/>
            <person name="Henderson C."/>
            <person name="Gordon D."/>
            <person name="Auger K."/>
            <person name="Wright D."/>
            <person name="Collins J."/>
            <person name="Raisen C."/>
            <person name="Dyer L."/>
            <person name="Leung K."/>
            <person name="Robertson L."/>
            <person name="Ambridge K."/>
            <person name="Leongamornlert D."/>
            <person name="McGuire S."/>
            <person name="Gilderthorp R."/>
            <person name="Griffiths C."/>
            <person name="Manthravadi D."/>
            <person name="Nichol S."/>
            <person name="Barker G."/>
            <person name="Whitehead S."/>
            <person name="Kay M."/>
            <person name="Brown J."/>
            <person name="Murnane C."/>
            <person name="Gray E."/>
            <person name="Humphries M."/>
            <person name="Sycamore N."/>
            <person name="Barker D."/>
            <person name="Saunders D."/>
            <person name="Wallis J."/>
            <person name="Babbage A."/>
            <person name="Hammond S."/>
            <person name="Mashreghi-Mohammadi M."/>
            <person name="Barr L."/>
            <person name="Martin S."/>
            <person name="Wray P."/>
            <person name="Ellington A."/>
            <person name="Matthews N."/>
            <person name="Ellwood M."/>
            <person name="Woodmansey R."/>
            <person name="Clark G."/>
            <person name="Cooper J."/>
            <person name="Tromans A."/>
            <person name="Grafham D."/>
            <person name="Skuce C."/>
            <person name="Pandian R."/>
            <person name="Andrews R."/>
            <person name="Harrison E."/>
            <person name="Kimberley A."/>
            <person name="Garnett J."/>
            <person name="Fosker N."/>
            <person name="Hall R."/>
            <person name="Garner P."/>
            <person name="Kelly D."/>
            <person name="Bird C."/>
            <person name="Palmer S."/>
            <person name="Gehring I."/>
            <person name="Berger A."/>
            <person name="Dooley C.M."/>
            <person name="Ersan-Urun Z."/>
            <person name="Eser C."/>
            <person name="Geiger H."/>
            <person name="Geisler M."/>
            <person name="Karotki L."/>
            <person name="Kirn A."/>
            <person name="Konantz J."/>
            <person name="Konantz M."/>
            <person name="Oberlander M."/>
            <person name="Rudolph-Geiger S."/>
            <person name="Teucke M."/>
            <person name="Lanz C."/>
            <person name="Raddatz G."/>
            <person name="Osoegawa K."/>
            <person name="Zhu B."/>
            <person name="Rapp A."/>
            <person name="Widaa S."/>
            <person name="Langford C."/>
            <person name="Yang F."/>
            <person name="Schuster S.C."/>
            <person name="Carter N.P."/>
            <person name="Harrow J."/>
            <person name="Ning Z."/>
            <person name="Herrero J."/>
            <person name="Searle S.M."/>
            <person name="Enright A."/>
            <person name="Geisler R."/>
            <person name="Plasterk R.H."/>
            <person name="Lee C."/>
            <person name="Westerfield M."/>
            <person name="de Jong P.J."/>
            <person name="Zon L.I."/>
            <person name="Postlethwait J.H."/>
            <person name="Nusslein-Volhard C."/>
            <person name="Hubbard T.J."/>
            <person name="Roest Crollius H."/>
            <person name="Rogers J."/>
            <person name="Stemple D.L."/>
        </authorList>
    </citation>
    <scope>NUCLEOTIDE SEQUENCE [LARGE SCALE GENOMIC DNA]</scope>
    <source>
        <strain>Tuebingen</strain>
    </source>
</reference>
<reference key="2">
    <citation type="submission" date="2005-04" db="EMBL/GenBank/DDBJ databases">
        <authorList>
            <consortium name="NIH - Zebrafish Gene Collection (ZGC) project"/>
        </authorList>
    </citation>
    <scope>NUCLEOTIDE SEQUENCE [LARGE SCALE MRNA] OF 1-282</scope>
    <source>
        <tissue>Embryo</tissue>
    </source>
</reference>
<reference key="3">
    <citation type="journal article" date="2018" name="Science">
        <title>Cap-specific terminal N6-methylation of RNA by an RNA polymerase II-associated methyltransferase.</title>
        <authorList>
            <person name="Akichika S."/>
            <person name="Hirano S."/>
            <person name="Shichino Y."/>
            <person name="Suzuki T."/>
            <person name="Nishimasu H."/>
            <person name="Ishitani R."/>
            <person name="Sugita A."/>
            <person name="Hirose Y."/>
            <person name="Iwasaki S."/>
            <person name="Nureki O."/>
            <person name="Suzuki T."/>
        </authorList>
    </citation>
    <scope>X-RAY CRYSTALLOGRAPHY (1.8 ANGSTROMS) OF 178-673 IN COMPLEX WITH S-ADENOSYL-L-METHIONINE AND M7G-CAPPED RNA</scope>
    <scope>FUNCTION</scope>
    <scope>CATALYTIC ACTIVITY</scope>
    <scope>MUTAGENESIS OF ARG-239; ARG-269; ASN-558; PHE-561; GLU-563; TRP-593; 596-PRO-PRO-597; HIS-612 AND PHE-619</scope>
</reference>
<keyword id="KW-0002">3D-structure</keyword>
<keyword id="KW-0489">Methyltransferase</keyword>
<keyword id="KW-0539">Nucleus</keyword>
<keyword id="KW-1185">Reference proteome</keyword>
<keyword id="KW-0808">Transferase</keyword>
<accession>A0A0R4IKJ1</accession>
<accession>A0A0R4IDC3</accession>
<accession>Q568T9</accession>
<dbReference type="EC" id="2.1.1.62" evidence="4"/>
<dbReference type="EMBL" id="CABZ01085327">
    <property type="status" value="NOT_ANNOTATED_CDS"/>
    <property type="molecule type" value="Genomic_DNA"/>
</dbReference>
<dbReference type="EMBL" id="CU638700">
    <property type="status" value="NOT_ANNOTATED_CDS"/>
    <property type="molecule type" value="Genomic_DNA"/>
</dbReference>
<dbReference type="EMBL" id="BC092722">
    <property type="protein sequence ID" value="AAH92722.1"/>
    <property type="status" value="ALT_SEQ"/>
    <property type="molecule type" value="mRNA"/>
</dbReference>
<dbReference type="RefSeq" id="NP_001410701.1">
    <property type="nucleotide sequence ID" value="NM_001423772.1"/>
</dbReference>
<dbReference type="RefSeq" id="XP_068077823.1">
    <property type="nucleotide sequence ID" value="XM_068221722.1"/>
</dbReference>
<dbReference type="RefSeq" id="XP_068077824.1">
    <property type="nucleotide sequence ID" value="XM_068221723.1"/>
</dbReference>
<dbReference type="RefSeq" id="XP_688220.3">
    <property type="nucleotide sequence ID" value="XM_683128.8"/>
</dbReference>
<dbReference type="PDB" id="6IRX">
    <property type="method" value="X-ray"/>
    <property type="resolution" value="2.00 A"/>
    <property type="chains" value="A=178-673"/>
</dbReference>
<dbReference type="PDB" id="6IRY">
    <property type="method" value="X-ray"/>
    <property type="resolution" value="1.80 A"/>
    <property type="chains" value="A=178-673"/>
</dbReference>
<dbReference type="PDB" id="6IRZ">
    <property type="method" value="X-ray"/>
    <property type="resolution" value="2.00 A"/>
    <property type="chains" value="A=178-673"/>
</dbReference>
<dbReference type="PDB" id="6IS0">
    <property type="method" value="X-ray"/>
    <property type="resolution" value="1.80 A"/>
    <property type="chains" value="A=178-673"/>
</dbReference>
<dbReference type="PDBsum" id="6IRX"/>
<dbReference type="PDBsum" id="6IRY"/>
<dbReference type="PDBsum" id="6IRZ"/>
<dbReference type="PDBsum" id="6IS0"/>
<dbReference type="SMR" id="A0A0R4IKJ1"/>
<dbReference type="FunCoup" id="A0A0R4IKJ1">
    <property type="interactions" value="2148"/>
</dbReference>
<dbReference type="STRING" id="7955.ENSDARP00000135280"/>
<dbReference type="PaxDb" id="7955-ENSDARP00000010989"/>
<dbReference type="Ensembl" id="ENSDART00000172081">
    <property type="protein sequence ID" value="ENSDARP00000135280"/>
    <property type="gene ID" value="ENSDARG00000099084"/>
</dbReference>
<dbReference type="GeneID" id="553360"/>
<dbReference type="eggNOG" id="ENOG502QVT7">
    <property type="taxonomic scope" value="Eukaryota"/>
</dbReference>
<dbReference type="InParanoid" id="A0A0R4IKJ1"/>
<dbReference type="OMA" id="ANENHRS"/>
<dbReference type="OrthoDB" id="193787at2759"/>
<dbReference type="PhylomeDB" id="A0A0R4IKJ1"/>
<dbReference type="PRO" id="PR:A0A0R4IKJ1"/>
<dbReference type="Proteomes" id="UP000000437">
    <property type="component" value="Chromosome 6"/>
</dbReference>
<dbReference type="Bgee" id="ENSDARG00000099084">
    <property type="expression patterns" value="Expressed in gastrula and 20 other cell types or tissues"/>
</dbReference>
<dbReference type="GO" id="GO:0005634">
    <property type="term" value="C:nucleus"/>
    <property type="evidence" value="ECO:0000250"/>
    <property type="project" value="UniProtKB"/>
</dbReference>
<dbReference type="GO" id="GO:0016422">
    <property type="term" value="F:mRNA (2'-O-methyladenosine-N6-)-methyltransferase activity"/>
    <property type="evidence" value="ECO:0000314"/>
    <property type="project" value="UniProtKB"/>
</dbReference>
<dbReference type="GO" id="GO:0099122">
    <property type="term" value="F:RNA polymerase II C-terminal domain binding"/>
    <property type="evidence" value="ECO:0000250"/>
    <property type="project" value="UniProtKB"/>
</dbReference>
<dbReference type="GO" id="GO:1904047">
    <property type="term" value="F:S-adenosyl-L-methionine binding"/>
    <property type="evidence" value="ECO:0000314"/>
    <property type="project" value="UniProtKB"/>
</dbReference>
<dbReference type="GO" id="GO:0032259">
    <property type="term" value="P:methylation"/>
    <property type="evidence" value="ECO:0007669"/>
    <property type="project" value="UniProtKB-KW"/>
</dbReference>
<dbReference type="GO" id="GO:0006397">
    <property type="term" value="P:mRNA processing"/>
    <property type="evidence" value="ECO:0000314"/>
    <property type="project" value="UniProtKB"/>
</dbReference>
<dbReference type="GO" id="GO:0045727">
    <property type="term" value="P:positive regulation of translation"/>
    <property type="evidence" value="ECO:0000250"/>
    <property type="project" value="UniProtKB"/>
</dbReference>
<dbReference type="CDD" id="cd00201">
    <property type="entry name" value="WW"/>
    <property type="match status" value="1"/>
</dbReference>
<dbReference type="FunFam" id="1.20.1270.10:FF:000020">
    <property type="entry name" value="Phosphorylated CTD-interacting factor 1"/>
    <property type="match status" value="1"/>
</dbReference>
<dbReference type="FunFam" id="2.20.70.10:FF:000036">
    <property type="entry name" value="Phosphorylated CTD-interacting factor 1"/>
    <property type="match status" value="1"/>
</dbReference>
<dbReference type="Gene3D" id="1.20.1270.10">
    <property type="match status" value="1"/>
</dbReference>
<dbReference type="Gene3D" id="2.20.70.10">
    <property type="match status" value="1"/>
</dbReference>
<dbReference type="InterPro" id="IPR029048">
    <property type="entry name" value="HSP70_C_sf"/>
</dbReference>
<dbReference type="InterPro" id="IPR039881">
    <property type="entry name" value="PCIF1-like"/>
</dbReference>
<dbReference type="InterPro" id="IPR022035">
    <property type="entry name" value="PCIF1_WW"/>
</dbReference>
<dbReference type="InterPro" id="IPR001202">
    <property type="entry name" value="WW_dom"/>
</dbReference>
<dbReference type="InterPro" id="IPR036020">
    <property type="entry name" value="WW_dom_sf"/>
</dbReference>
<dbReference type="PANTHER" id="PTHR21727:SF0">
    <property type="entry name" value="MRNA (2'-O-METHYLADENOSINE-N(6)-)-METHYLTRANSFERASE"/>
    <property type="match status" value="1"/>
</dbReference>
<dbReference type="PANTHER" id="PTHR21727">
    <property type="entry name" value="PHOSPHORYLATED CTD INTERACTING FACTOR 1"/>
    <property type="match status" value="1"/>
</dbReference>
<dbReference type="Pfam" id="PF12237">
    <property type="entry name" value="PCIF1_WW"/>
    <property type="match status" value="1"/>
</dbReference>
<dbReference type="Pfam" id="PF00397">
    <property type="entry name" value="WW"/>
    <property type="match status" value="1"/>
</dbReference>
<dbReference type="SMART" id="SM00456">
    <property type="entry name" value="WW"/>
    <property type="match status" value="1"/>
</dbReference>
<dbReference type="SUPFAM" id="SSF51045">
    <property type="entry name" value="WW domain"/>
    <property type="match status" value="1"/>
</dbReference>
<dbReference type="PROSITE" id="PS50020">
    <property type="entry name" value="WW_DOMAIN_2"/>
    <property type="match status" value="1"/>
</dbReference>
<comment type="function">
    <text evidence="4">Cap-specific adenosine methyltransferase that catalyzes formation of N(6),2'-O-dimethyladenosine cap (m6A(m)) by methylating the adenosine at the second transcribed position of capped mRNAs (PubMed:30467178).</text>
</comment>
<comment type="catalytic activity">
    <reaction evidence="4">
        <text>a 5'-end (N(7)-methyl 5'-triphosphoguanosine)-(2'-O-methyladenosine) in mRNA + S-adenosyl-L-methionine = a 5'-end (N(7)-methyl 5'-triphosphoguanosine)-(N(6),2'-O-dimethyladenosine) in mRNA + S-adenosyl-L-homocysteine + H(+)</text>
        <dbReference type="Rhea" id="RHEA:22744"/>
        <dbReference type="Rhea" id="RHEA-COMP:11518"/>
        <dbReference type="Rhea" id="RHEA-COMP:11519"/>
        <dbReference type="ChEBI" id="CHEBI:15378"/>
        <dbReference type="ChEBI" id="CHEBI:57856"/>
        <dbReference type="ChEBI" id="CHEBI:59789"/>
        <dbReference type="ChEBI" id="CHEBI:85958"/>
        <dbReference type="ChEBI" id="CHEBI:85959"/>
        <dbReference type="EC" id="2.1.1.62"/>
    </reaction>
    <physiologicalReaction direction="left-to-right" evidence="4">
        <dbReference type="Rhea" id="RHEA:22745"/>
    </physiologicalReaction>
</comment>
<comment type="activity regulation">
    <text evidence="1">Cap-specific adenosine methyltransferase activity is inhibited by zinc.</text>
</comment>
<comment type="subcellular location">
    <subcellularLocation>
        <location evidence="1">Nucleus</location>
    </subcellularLocation>
</comment>
<comment type="similarity">
    <text evidence="6">Belongs to the CAPAM family.</text>
</comment>
<comment type="caution">
    <text evidence="1 4">The role of N(6),2'-O-dimethyladenosine cap (m6A(m)) on transcripts is unclear and subject to discussion. According to a report, m6A(m) promotes the translation of capped mRNAs (PubMed:30467178). However, another study did not observe a clear effect on mRNA translation, but reported an increased stability of a subset of m6A(m) transcripts (By similarity). According to a third report, m6A(m) inhibits mRNA translation without affecting mRNA stability (By similarity).</text>
</comment>
<comment type="sequence caution" evidence="6">
    <conflict type="miscellaneous discrepancy">
        <sequence resource="EMBL-CDS" id="AAH92722"/>
    </conflict>
    <text>Contaminating sequence. Potential poly-A sequence.</text>
</comment>
<sequence length="721" mass="81297">MTSENHTTIKADSALVMSPTGSTSQAAPFSPSTSKPIQELPDELIQAGWSKCWSKRENRPYYFNRFTNQSLWEMPVLGQHDVISDPLGLNAAPASGEANADAGLGNGQRKRHPSEDASQAGPNSFKRPKVEIPATPTTPTVPISPSTPGVKPWVNTTTDEKQGQASTPAPAPYRPSVVYWDLDIQTNAVIRERAPADHLPPHPEIELQRAQLTTKLRQHYHELCSQREGIEPPRESFNRWLLERKVVDKGLDPLLPSECDPVISPSMFREIMNDIPIRLSRIKYKEEARKLLFKYAEAAKKMIDSRNATPESRKVVKWNVEDTMNWLRRDHSASKEDYMDRLEHLRKQCGPHVASVAKDSVEGICSKIYHISAEYVRRIRQAHLTLLKECNISVDGTESAEVQDRLVYCYPVRLSIPAPPQTRVELHFENDIACLRFKGEMVKVSRGHFNKLELLYRYSCIDDPRFEKFLSRVWCLIKRYQVMFGSGVNEGSGLQGSLPVPVFEALNKQFGVTFECFASPLNCYFKQFCSAFPDIDGFFGSRGPFLSFSPASGSFEANPPFCEELMDAMVTHFEDLLGRSSEPLSFIIFVPEWRDPPTPALTRMEASRFRRHQMTVPAFEHEYRSGSQHICKREEIYYKAIHGTAVIFLQNNAGFAKWEPTTERIQELLAAYKVSGRSLPSPGPSSTNTGEKDSKPAPERTAPSQDNSSPVDKTAQDTTNT</sequence>
<name>CAPAM_DANRE</name>
<feature type="chain" id="PRO_0000446373" description="mRNA (2'-O-methyladenosine-N(6)-)-methyltransferase">
    <location>
        <begin position="1"/>
        <end position="721"/>
    </location>
</feature>
<feature type="domain" description="WW" evidence="2">
    <location>
        <begin position="43"/>
        <end position="77"/>
    </location>
</feature>
<feature type="region of interest" description="Disordered" evidence="3">
    <location>
        <begin position="1"/>
        <end position="37"/>
    </location>
</feature>
<feature type="region of interest" description="Disordered" evidence="3">
    <location>
        <begin position="93"/>
        <end position="170"/>
    </location>
</feature>
<feature type="region of interest" description="Disordered" evidence="3">
    <location>
        <begin position="675"/>
        <end position="721"/>
    </location>
</feature>
<feature type="compositionally biased region" description="Polar residues" evidence="3">
    <location>
        <begin position="1"/>
        <end position="10"/>
    </location>
</feature>
<feature type="compositionally biased region" description="Polar residues" evidence="3">
    <location>
        <begin position="19"/>
        <end position="36"/>
    </location>
</feature>
<feature type="compositionally biased region" description="Low complexity" evidence="3">
    <location>
        <begin position="132"/>
        <end position="148"/>
    </location>
</feature>
<feature type="compositionally biased region" description="Low complexity" evidence="3">
    <location>
        <begin position="675"/>
        <end position="686"/>
    </location>
</feature>
<feature type="compositionally biased region" description="Polar residues" evidence="3">
    <location>
        <begin position="702"/>
        <end position="721"/>
    </location>
</feature>
<feature type="binding site" evidence="4 8 9">
    <location>
        <position position="239"/>
    </location>
    <ligand>
        <name>substrate</name>
    </ligand>
</feature>
<feature type="binding site" evidence="4 8 9">
    <location>
        <position position="269"/>
    </location>
    <ligand>
        <name>substrate</name>
    </ligand>
</feature>
<feature type="binding site" evidence="4 7 8 9">
    <location>
        <begin position="558"/>
        <end position="561"/>
    </location>
    <ligand>
        <name>S-adenosyl-L-methionine</name>
        <dbReference type="ChEBI" id="CHEBI:59789"/>
    </ligand>
</feature>
<feature type="binding site" evidence="4 8 9">
    <location>
        <position position="563"/>
    </location>
    <ligand>
        <name>substrate</name>
    </ligand>
</feature>
<feature type="binding site" evidence="4 8 9">
    <location>
        <begin position="593"/>
        <end position="597"/>
    </location>
    <ligand>
        <name>substrate</name>
    </ligand>
</feature>
<feature type="binding site" evidence="4 7 8 9">
    <location>
        <begin position="619"/>
        <end position="621"/>
    </location>
    <ligand>
        <name>S-adenosyl-L-methionine</name>
        <dbReference type="ChEBI" id="CHEBI:59789"/>
    </ligand>
</feature>
<feature type="mutagenesis site" description="Strongly reduced methyltransferase activity." evidence="4">
    <original>R</original>
    <variation>A</variation>
    <location>
        <position position="239"/>
    </location>
</feature>
<feature type="mutagenesis site" description="Strongly reduced methyltransferase activity." evidence="4">
    <original>R</original>
    <variation>A</variation>
    <location>
        <position position="269"/>
    </location>
</feature>
<feature type="mutagenesis site" description="Strongly reduced methyltransferase activity." evidence="4">
    <original>N</original>
    <variation>A</variation>
    <location>
        <position position="558"/>
    </location>
</feature>
<feature type="mutagenesis site" description="Strongly reduced methyltransferase activity." evidence="4">
    <original>F</original>
    <variation>A</variation>
    <location>
        <position position="561"/>
    </location>
</feature>
<feature type="mutagenesis site" description="Strongly reduced methyltransferase activity." evidence="4">
    <original>E</original>
    <variation>A</variation>
    <location>
        <position position="563"/>
    </location>
</feature>
<feature type="mutagenesis site" description="Abolished methyltransferase activity." evidence="4">
    <original>W</original>
    <variation>A</variation>
    <location>
        <position position="593"/>
    </location>
</feature>
<feature type="mutagenesis site" description="Abolished methyltransferase activity." evidence="4">
    <original>PP</original>
    <variation>AA</variation>
    <location>
        <begin position="596"/>
        <end position="597"/>
    </location>
</feature>
<feature type="mutagenesis site" description="Strongly reduced methyltransferase activity." evidence="4">
    <original>H</original>
    <variation>A</variation>
    <location>
        <position position="612"/>
    </location>
</feature>
<feature type="mutagenesis site" description="Reduced methyltransferase activity." evidence="4">
    <original>F</original>
    <variation>A</variation>
    <location>
        <position position="619"/>
    </location>
</feature>
<feature type="strand" evidence="11">
    <location>
        <begin position="189"/>
        <end position="191"/>
    </location>
</feature>
<feature type="helix" evidence="11">
    <location>
        <begin position="203"/>
        <end position="228"/>
    </location>
</feature>
<feature type="helix" evidence="11">
    <location>
        <begin position="236"/>
        <end position="247"/>
    </location>
</feature>
<feature type="strand" evidence="11">
    <location>
        <begin position="253"/>
        <end position="255"/>
    </location>
</feature>
<feature type="strand" evidence="11">
    <location>
        <begin position="260"/>
        <end position="263"/>
    </location>
</feature>
<feature type="helix" evidence="11">
    <location>
        <begin position="265"/>
        <end position="273"/>
    </location>
</feature>
<feature type="helix" evidence="11">
    <location>
        <begin position="285"/>
        <end position="305"/>
    </location>
</feature>
<feature type="helix" evidence="11">
    <location>
        <begin position="310"/>
        <end position="327"/>
    </location>
</feature>
<feature type="strand" evidence="11">
    <location>
        <begin position="329"/>
        <end position="331"/>
    </location>
</feature>
<feature type="helix" evidence="11">
    <location>
        <begin position="335"/>
        <end position="389"/>
    </location>
</feature>
<feature type="strand" evidence="11">
    <location>
        <begin position="406"/>
        <end position="408"/>
    </location>
</feature>
<feature type="strand" evidence="11">
    <location>
        <begin position="414"/>
        <end position="416"/>
    </location>
</feature>
<feature type="strand" evidence="11">
    <location>
        <begin position="424"/>
        <end position="429"/>
    </location>
</feature>
<feature type="strand" evidence="11">
    <location>
        <begin position="432"/>
        <end position="437"/>
    </location>
</feature>
<feature type="strand" evidence="11">
    <location>
        <begin position="440"/>
        <end position="445"/>
    </location>
</feature>
<feature type="helix" evidence="11">
    <location>
        <begin position="446"/>
        <end position="459"/>
    </location>
</feature>
<feature type="helix" evidence="11">
    <location>
        <begin position="469"/>
        <end position="484"/>
    </location>
</feature>
<feature type="helix" evidence="11">
    <location>
        <begin position="500"/>
        <end position="510"/>
    </location>
</feature>
<feature type="strand" evidence="11">
    <location>
        <begin position="514"/>
        <end position="517"/>
    </location>
</feature>
<feature type="turn" evidence="11">
    <location>
        <begin position="520"/>
        <end position="522"/>
    </location>
</feature>
<feature type="strand" evidence="11">
    <location>
        <begin position="524"/>
        <end position="526"/>
    </location>
</feature>
<feature type="helix" evidence="11">
    <location>
        <begin position="533"/>
        <end position="536"/>
    </location>
</feature>
<feature type="helix" evidence="11">
    <location>
        <begin position="537"/>
        <end position="539"/>
    </location>
</feature>
<feature type="helix" evidence="11">
    <location>
        <begin position="545"/>
        <end position="547"/>
    </location>
</feature>
<feature type="strand" evidence="11">
    <location>
        <begin position="550"/>
        <end position="557"/>
    </location>
</feature>
<feature type="helix" evidence="11">
    <location>
        <begin position="563"/>
        <end position="579"/>
    </location>
</feature>
<feature type="strand" evidence="11">
    <location>
        <begin position="584"/>
        <end position="591"/>
    </location>
</feature>
<feature type="turn" evidence="12">
    <location>
        <begin position="594"/>
        <end position="597"/>
    </location>
</feature>
<feature type="helix" evidence="11">
    <location>
        <begin position="599"/>
        <end position="605"/>
    </location>
</feature>
<feature type="strand" evidence="11">
    <location>
        <begin position="610"/>
        <end position="616"/>
    </location>
</feature>
<feature type="helix" evidence="10">
    <location>
        <begin position="638"/>
        <end position="640"/>
    </location>
</feature>
<feature type="strand" evidence="11">
    <location>
        <begin position="644"/>
        <end position="650"/>
    </location>
</feature>
<feature type="helix" evidence="11">
    <location>
        <begin position="652"/>
        <end position="657"/>
    </location>
</feature>
<feature type="helix" evidence="11">
    <location>
        <begin position="662"/>
        <end position="670"/>
    </location>
</feature>
<protein>
    <recommendedName>
        <fullName evidence="1">mRNA (2'-O-methyladenosine-N(6)-)-methyltransferase</fullName>
        <ecNumber evidence="4">2.1.1.62</ecNumber>
    </recommendedName>
    <alternativeName>
        <fullName evidence="1">Cap-specific adenosine methyltransferase</fullName>
        <shortName evidence="1">CAPAM</shortName>
        <shortName evidence="5">zCAPAM</shortName>
    </alternativeName>
    <alternativeName>
        <fullName evidence="1">Phosphorylated CTD-interacting factor 1</fullName>
    </alternativeName>
</protein>
<organism>
    <name type="scientific">Danio rerio</name>
    <name type="common">Zebrafish</name>
    <name type="synonym">Brachydanio rerio</name>
    <dbReference type="NCBI Taxonomy" id="7955"/>
    <lineage>
        <taxon>Eukaryota</taxon>
        <taxon>Metazoa</taxon>
        <taxon>Chordata</taxon>
        <taxon>Craniata</taxon>
        <taxon>Vertebrata</taxon>
        <taxon>Euteleostomi</taxon>
        <taxon>Actinopterygii</taxon>
        <taxon>Neopterygii</taxon>
        <taxon>Teleostei</taxon>
        <taxon>Ostariophysi</taxon>
        <taxon>Cypriniformes</taxon>
        <taxon>Danionidae</taxon>
        <taxon>Danioninae</taxon>
        <taxon>Danio</taxon>
    </lineage>
</organism>
<evidence type="ECO:0000250" key="1">
    <source>
        <dbReference type="UniProtKB" id="Q9H4Z3"/>
    </source>
</evidence>
<evidence type="ECO:0000255" key="2">
    <source>
        <dbReference type="PROSITE-ProRule" id="PRU00224"/>
    </source>
</evidence>
<evidence type="ECO:0000256" key="3">
    <source>
        <dbReference type="SAM" id="MobiDB-lite"/>
    </source>
</evidence>
<evidence type="ECO:0000269" key="4">
    <source>
    </source>
</evidence>
<evidence type="ECO:0000303" key="5">
    <source>
    </source>
</evidence>
<evidence type="ECO:0000305" key="6"/>
<evidence type="ECO:0007744" key="7">
    <source>
        <dbReference type="PDB" id="6IRY"/>
    </source>
</evidence>
<evidence type="ECO:0007744" key="8">
    <source>
        <dbReference type="PDB" id="6IRZ"/>
    </source>
</evidence>
<evidence type="ECO:0007744" key="9">
    <source>
        <dbReference type="PDB" id="6IS0"/>
    </source>
</evidence>
<evidence type="ECO:0007829" key="10">
    <source>
        <dbReference type="PDB" id="6IRX"/>
    </source>
</evidence>
<evidence type="ECO:0007829" key="11">
    <source>
        <dbReference type="PDB" id="6IRY"/>
    </source>
</evidence>
<evidence type="ECO:0007829" key="12">
    <source>
        <dbReference type="PDB" id="6IS0"/>
    </source>
</evidence>